<organism>
    <name type="scientific">Bitis caudalis</name>
    <name type="common">Horned adder</name>
    <name type="synonym">Horned viper</name>
    <dbReference type="NCBI Taxonomy" id="8693"/>
    <lineage>
        <taxon>Eukaryota</taxon>
        <taxon>Metazoa</taxon>
        <taxon>Chordata</taxon>
        <taxon>Craniata</taxon>
        <taxon>Vertebrata</taxon>
        <taxon>Euteleostomi</taxon>
        <taxon>Lepidosauria</taxon>
        <taxon>Squamata</taxon>
        <taxon>Bifurcata</taxon>
        <taxon>Unidentata</taxon>
        <taxon>Episquamata</taxon>
        <taxon>Toxicofera</taxon>
        <taxon>Serpentes</taxon>
        <taxon>Colubroidea</taxon>
        <taxon>Viperidae</taxon>
        <taxon>Viperinae</taxon>
        <taxon>Bitis</taxon>
    </lineage>
</organism>
<keyword id="KW-1203">Blood coagulation cascade inhibiting toxin</keyword>
<keyword id="KW-0106">Calcium</keyword>
<keyword id="KW-0903">Direct protein sequencing</keyword>
<keyword id="KW-1015">Disulfide bond</keyword>
<keyword id="KW-1199">Hemostasis impairing toxin</keyword>
<keyword id="KW-0378">Hydrolase</keyword>
<keyword id="KW-0442">Lipid degradation</keyword>
<keyword id="KW-0443">Lipid metabolism</keyword>
<keyword id="KW-0479">Metal-binding</keyword>
<keyword id="KW-0528">Neurotoxin</keyword>
<keyword id="KW-0638">Presynaptic neurotoxin</keyword>
<keyword id="KW-0964">Secreted</keyword>
<keyword id="KW-0800">Toxin</keyword>
<sequence>NLIQFGNMISAMTGKSSLAYASYGCYCGWGGKGQPKDDTDRCCFVHDCCYGKADKCSPKMILYSYKFHNGNIVCGDKNACKKKVCECDRVAAICFAASKHSYNKNLWRYPSSKCTGTAEKC</sequence>
<dbReference type="EC" id="3.1.1.4"/>
<dbReference type="PIR" id="A00762">
    <property type="entry name" value="PSBGAC"/>
</dbReference>
<dbReference type="SMR" id="P00622"/>
<dbReference type="GO" id="GO:0005576">
    <property type="term" value="C:extracellular region"/>
    <property type="evidence" value="ECO:0007669"/>
    <property type="project" value="UniProtKB-SubCell"/>
</dbReference>
<dbReference type="GO" id="GO:0005509">
    <property type="term" value="F:calcium ion binding"/>
    <property type="evidence" value="ECO:0007669"/>
    <property type="project" value="InterPro"/>
</dbReference>
<dbReference type="GO" id="GO:0047498">
    <property type="term" value="F:calcium-dependent phospholipase A2 activity"/>
    <property type="evidence" value="ECO:0007669"/>
    <property type="project" value="TreeGrafter"/>
</dbReference>
<dbReference type="GO" id="GO:0005543">
    <property type="term" value="F:phospholipid binding"/>
    <property type="evidence" value="ECO:0007669"/>
    <property type="project" value="TreeGrafter"/>
</dbReference>
<dbReference type="GO" id="GO:0090729">
    <property type="term" value="F:toxin activity"/>
    <property type="evidence" value="ECO:0007669"/>
    <property type="project" value="UniProtKB-KW"/>
</dbReference>
<dbReference type="GO" id="GO:0050482">
    <property type="term" value="P:arachidonate secretion"/>
    <property type="evidence" value="ECO:0007669"/>
    <property type="project" value="InterPro"/>
</dbReference>
<dbReference type="GO" id="GO:0016042">
    <property type="term" value="P:lipid catabolic process"/>
    <property type="evidence" value="ECO:0007669"/>
    <property type="project" value="UniProtKB-KW"/>
</dbReference>
<dbReference type="GO" id="GO:0006644">
    <property type="term" value="P:phospholipid metabolic process"/>
    <property type="evidence" value="ECO:0007669"/>
    <property type="project" value="InterPro"/>
</dbReference>
<dbReference type="CDD" id="cd00125">
    <property type="entry name" value="PLA2c"/>
    <property type="match status" value="1"/>
</dbReference>
<dbReference type="FunFam" id="1.20.90.10:FF:000001">
    <property type="entry name" value="Basic phospholipase A2 homolog"/>
    <property type="match status" value="1"/>
</dbReference>
<dbReference type="Gene3D" id="1.20.90.10">
    <property type="entry name" value="Phospholipase A2 domain"/>
    <property type="match status" value="1"/>
</dbReference>
<dbReference type="InterPro" id="IPR001211">
    <property type="entry name" value="PLipase_A2"/>
</dbReference>
<dbReference type="InterPro" id="IPR033112">
    <property type="entry name" value="PLipase_A2_Asp_AS"/>
</dbReference>
<dbReference type="InterPro" id="IPR016090">
    <property type="entry name" value="PLipase_A2_dom"/>
</dbReference>
<dbReference type="InterPro" id="IPR036444">
    <property type="entry name" value="PLipase_A2_dom_sf"/>
</dbReference>
<dbReference type="InterPro" id="IPR033113">
    <property type="entry name" value="PLipase_A2_His_AS"/>
</dbReference>
<dbReference type="PANTHER" id="PTHR11716:SF100">
    <property type="entry name" value="PHOSPHOLIPASE A2"/>
    <property type="match status" value="1"/>
</dbReference>
<dbReference type="PANTHER" id="PTHR11716">
    <property type="entry name" value="PHOSPHOLIPASE A2 FAMILY MEMBER"/>
    <property type="match status" value="1"/>
</dbReference>
<dbReference type="Pfam" id="PF00068">
    <property type="entry name" value="Phospholip_A2_1"/>
    <property type="match status" value="1"/>
</dbReference>
<dbReference type="PRINTS" id="PR00389">
    <property type="entry name" value="PHPHLIPASEA2"/>
</dbReference>
<dbReference type="SMART" id="SM00085">
    <property type="entry name" value="PA2c"/>
    <property type="match status" value="1"/>
</dbReference>
<dbReference type="SUPFAM" id="SSF48619">
    <property type="entry name" value="Phospholipase A2, PLA2"/>
    <property type="match status" value="1"/>
</dbReference>
<dbReference type="PROSITE" id="PS00119">
    <property type="entry name" value="PA2_ASP"/>
    <property type="match status" value="1"/>
</dbReference>
<dbReference type="PROSITE" id="PS00118">
    <property type="entry name" value="PA2_HIS"/>
    <property type="match status" value="1"/>
</dbReference>
<reference key="1">
    <citation type="journal article" date="1982" name="Toxicon">
        <title>Isolation and amino acid sequence of caudoxin, a presynaptic acting toxic phospholipase A2 from the venom of the horned puff adder (Bitis caudalis).</title>
        <authorList>
            <person name="Viljoen C.C."/>
            <person name="Botes D.P."/>
            <person name="Kruger H."/>
        </authorList>
    </citation>
    <scope>PROTEIN SEQUENCE</scope>
    <scope>FUNCTION</scope>
    <scope>TOXIC DOSE</scope>
    <source>
        <tissue>Venom</tissue>
    </source>
</reference>
<reference key="2">
    <citation type="journal article" date="1991" name="Toxicon">
        <title>Crystallization and preliminary diffraction analysis of caudoxin and notexin; two monomeric phospholipase A2 neurotoxins.</title>
        <authorList>
            <person name="Scott D.L."/>
            <person name="Achari A."/>
            <person name="Christensen P.A."/>
            <person name="Viljoen C.C."/>
            <person name="Sigler P.B."/>
        </authorList>
    </citation>
    <scope>CRYSTALLIZATION</scope>
    <scope>SUBUNIT</scope>
</reference>
<reference key="3">
    <citation type="journal article" date="1999" name="Arch. Biochem. Biophys.">
        <title>Targeting of venom phospholipases: the strongly anticoagulant phospholipase A(2) from Naja nigricollis venom binds to coagulation factor Xa to inhibit the prothrombinase complex.</title>
        <authorList>
            <person name="Kerns R.T."/>
            <person name="Kini R.M."/>
            <person name="Stefansson S."/>
            <person name="Evans H.J."/>
        </authorList>
    </citation>
    <scope>FUNCTION AS PROTHROMBINASE COMPLEX INHIBITOR</scope>
</reference>
<feature type="chain" id="PRO_0000161614" description="Basic phospholipase A2 caudoxin">
    <location>
        <begin position="1"/>
        <end position="121"/>
    </location>
</feature>
<feature type="active site" evidence="1">
    <location>
        <position position="46"/>
    </location>
</feature>
<feature type="active site" evidence="1">
    <location>
        <position position="88"/>
    </location>
</feature>
<feature type="binding site" evidence="1">
    <location>
        <position position="26"/>
    </location>
    <ligand>
        <name>Ca(2+)</name>
        <dbReference type="ChEBI" id="CHEBI:29108"/>
    </ligand>
</feature>
<feature type="binding site" evidence="1">
    <location>
        <position position="28"/>
    </location>
    <ligand>
        <name>Ca(2+)</name>
        <dbReference type="ChEBI" id="CHEBI:29108"/>
    </ligand>
</feature>
<feature type="binding site" evidence="1">
    <location>
        <position position="30"/>
    </location>
    <ligand>
        <name>Ca(2+)</name>
        <dbReference type="ChEBI" id="CHEBI:29108"/>
    </ligand>
</feature>
<feature type="binding site" evidence="1">
    <location>
        <position position="47"/>
    </location>
    <ligand>
        <name>Ca(2+)</name>
        <dbReference type="ChEBI" id="CHEBI:29108"/>
    </ligand>
</feature>
<feature type="disulfide bond" evidence="1">
    <location>
        <begin position="25"/>
        <end position="114"/>
    </location>
</feature>
<feature type="disulfide bond" evidence="1">
    <location>
        <begin position="27"/>
        <end position="43"/>
    </location>
</feature>
<feature type="disulfide bond" evidence="1">
    <location>
        <begin position="42"/>
        <end position="94"/>
    </location>
</feature>
<feature type="disulfide bond" evidence="1">
    <location>
        <begin position="48"/>
        <end position="121"/>
    </location>
</feature>
<feature type="disulfide bond" evidence="1">
    <location>
        <begin position="49"/>
        <end position="87"/>
    </location>
</feature>
<feature type="disulfide bond" evidence="1">
    <location>
        <begin position="56"/>
        <end position="80"/>
    </location>
</feature>
<feature type="disulfide bond" evidence="1">
    <location>
        <begin position="74"/>
        <end position="85"/>
    </location>
</feature>
<protein>
    <recommendedName>
        <fullName>Basic phospholipase A2 caudoxin</fullName>
        <shortName>svPLA2</shortName>
        <ecNumber>3.1.1.4</ecNumber>
    </recommendedName>
    <alternativeName>
        <fullName>Phosphatidylcholine 2-acylhydrolase</fullName>
    </alternativeName>
</protein>
<evidence type="ECO:0000250" key="1"/>
<evidence type="ECO:0000255" key="2">
    <source>
        <dbReference type="PROSITE-ProRule" id="PRU10035"/>
    </source>
</evidence>
<evidence type="ECO:0000255" key="3">
    <source>
        <dbReference type="PROSITE-ProRule" id="PRU10036"/>
    </source>
</evidence>
<evidence type="ECO:0000269" key="4">
    <source>
    </source>
</evidence>
<evidence type="ECO:0000269" key="5">
    <source>
    </source>
</evidence>
<evidence type="ECO:0000269" key="6">
    <source>
    </source>
</evidence>
<evidence type="ECO:0000305" key="7"/>
<name>PA2B_BITCA</name>
<accession>P00622</accession>
<proteinExistence type="evidence at protein level"/>
<comment type="function">
    <text evidence="4 6">Snake venom phospholipase A2 (PLA2) that shows anticoagulant activity and presynaptic neurotoxicity. Acts as an anticoagulant toxin by inhibiting prothrombinase complex formation. Shows about 50% of the prothrombinase complex inhibition compared to CM-IV of N.nigricollis venom. Acts as a neurotoxin by inhibiting neuromuscular transmission by blocking acetylcholine release from the nerve termini. PLA2 catalyzes the calcium-dependent hydrolysis of the 2-acyl groups in 3-sn-phosphoglycerides.</text>
</comment>
<comment type="catalytic activity">
    <reaction evidence="2 3">
        <text>a 1,2-diacyl-sn-glycero-3-phosphocholine + H2O = a 1-acyl-sn-glycero-3-phosphocholine + a fatty acid + H(+)</text>
        <dbReference type="Rhea" id="RHEA:15801"/>
        <dbReference type="ChEBI" id="CHEBI:15377"/>
        <dbReference type="ChEBI" id="CHEBI:15378"/>
        <dbReference type="ChEBI" id="CHEBI:28868"/>
        <dbReference type="ChEBI" id="CHEBI:57643"/>
        <dbReference type="ChEBI" id="CHEBI:58168"/>
        <dbReference type="EC" id="3.1.1.4"/>
    </reaction>
</comment>
<comment type="cofactor">
    <cofactor evidence="1">
        <name>Ca(2+)</name>
        <dbReference type="ChEBI" id="CHEBI:29108"/>
    </cofactor>
    <text evidence="1">Binds 1 Ca(2+) ion.</text>
</comment>
<comment type="subunit">
    <text evidence="5">Monomer.</text>
</comment>
<comment type="subcellular location">
    <subcellularLocation>
        <location>Secreted</location>
    </subcellularLocation>
</comment>
<comment type="tissue specificity">
    <text>Expressed by the venom gland.</text>
</comment>
<comment type="toxic dose">
    <text evidence="6">LD(50) is 0.18 mg/kg by intraperitoneal injection.</text>
</comment>
<comment type="similarity">
    <text evidence="7">Belongs to the phospholipase A2 family. Group II subfamily. D49 sub-subfamily.</text>
</comment>